<evidence type="ECO:0000255" key="1">
    <source>
        <dbReference type="HAMAP-Rule" id="MF_00173"/>
    </source>
</evidence>
<organism>
    <name type="scientific">Shewanella sp. (strain ANA-3)</name>
    <dbReference type="NCBI Taxonomy" id="94122"/>
    <lineage>
        <taxon>Bacteria</taxon>
        <taxon>Pseudomonadati</taxon>
        <taxon>Pseudomonadota</taxon>
        <taxon>Gammaproteobacteria</taxon>
        <taxon>Alteromonadales</taxon>
        <taxon>Shewanellaceae</taxon>
        <taxon>Shewanella</taxon>
    </lineage>
</organism>
<comment type="function">
    <text evidence="1">Regulates arginine biosynthesis genes.</text>
</comment>
<comment type="pathway">
    <text>Amino-acid biosynthesis; L-arginine biosynthesis [regulation].</text>
</comment>
<comment type="subcellular location">
    <subcellularLocation>
        <location evidence="1">Cytoplasm</location>
    </subcellularLocation>
</comment>
<comment type="similarity">
    <text evidence="1">Belongs to the ArgR family.</text>
</comment>
<feature type="chain" id="PRO_1000023593" description="Arginine repressor">
    <location>
        <begin position="1"/>
        <end position="156"/>
    </location>
</feature>
<protein>
    <recommendedName>
        <fullName evidence="1">Arginine repressor</fullName>
    </recommendedName>
</protein>
<dbReference type="EMBL" id="CP000469">
    <property type="protein sequence ID" value="ABK49733.1"/>
    <property type="molecule type" value="Genomic_DNA"/>
</dbReference>
<dbReference type="RefSeq" id="WP_011624073.1">
    <property type="nucleotide sequence ID" value="NC_008577.1"/>
</dbReference>
<dbReference type="SMR" id="A0L114"/>
<dbReference type="STRING" id="94122.Shewana3_3510"/>
<dbReference type="GeneID" id="94729435"/>
<dbReference type="KEGG" id="shn:Shewana3_3510"/>
<dbReference type="eggNOG" id="COG1438">
    <property type="taxonomic scope" value="Bacteria"/>
</dbReference>
<dbReference type="HOGENOM" id="CLU_097103_2_0_6"/>
<dbReference type="OrthoDB" id="7060358at2"/>
<dbReference type="UniPathway" id="UPA00068"/>
<dbReference type="Proteomes" id="UP000002589">
    <property type="component" value="Chromosome"/>
</dbReference>
<dbReference type="GO" id="GO:0005737">
    <property type="term" value="C:cytoplasm"/>
    <property type="evidence" value="ECO:0007669"/>
    <property type="project" value="UniProtKB-SubCell"/>
</dbReference>
<dbReference type="GO" id="GO:0034618">
    <property type="term" value="F:arginine binding"/>
    <property type="evidence" value="ECO:0007669"/>
    <property type="project" value="InterPro"/>
</dbReference>
<dbReference type="GO" id="GO:0003677">
    <property type="term" value="F:DNA binding"/>
    <property type="evidence" value="ECO:0007669"/>
    <property type="project" value="UniProtKB-KW"/>
</dbReference>
<dbReference type="GO" id="GO:0003700">
    <property type="term" value="F:DNA-binding transcription factor activity"/>
    <property type="evidence" value="ECO:0007669"/>
    <property type="project" value="UniProtKB-UniRule"/>
</dbReference>
<dbReference type="GO" id="GO:0006526">
    <property type="term" value="P:L-arginine biosynthetic process"/>
    <property type="evidence" value="ECO:0007669"/>
    <property type="project" value="UniProtKB-UniPathway"/>
</dbReference>
<dbReference type="GO" id="GO:0051259">
    <property type="term" value="P:protein complex oligomerization"/>
    <property type="evidence" value="ECO:0007669"/>
    <property type="project" value="InterPro"/>
</dbReference>
<dbReference type="GO" id="GO:1900079">
    <property type="term" value="P:regulation of arginine biosynthetic process"/>
    <property type="evidence" value="ECO:0007669"/>
    <property type="project" value="UniProtKB-UniRule"/>
</dbReference>
<dbReference type="Gene3D" id="3.30.1360.40">
    <property type="match status" value="1"/>
</dbReference>
<dbReference type="Gene3D" id="1.10.10.10">
    <property type="entry name" value="Winged helix-like DNA-binding domain superfamily/Winged helix DNA-binding domain"/>
    <property type="match status" value="1"/>
</dbReference>
<dbReference type="HAMAP" id="MF_00173">
    <property type="entry name" value="Arg_repressor"/>
    <property type="match status" value="1"/>
</dbReference>
<dbReference type="InterPro" id="IPR001669">
    <property type="entry name" value="Arg_repress"/>
</dbReference>
<dbReference type="InterPro" id="IPR020899">
    <property type="entry name" value="Arg_repress_C"/>
</dbReference>
<dbReference type="InterPro" id="IPR036251">
    <property type="entry name" value="Arg_repress_C_sf"/>
</dbReference>
<dbReference type="InterPro" id="IPR020900">
    <property type="entry name" value="Arg_repress_DNA-bd"/>
</dbReference>
<dbReference type="InterPro" id="IPR036388">
    <property type="entry name" value="WH-like_DNA-bd_sf"/>
</dbReference>
<dbReference type="InterPro" id="IPR036390">
    <property type="entry name" value="WH_DNA-bd_sf"/>
</dbReference>
<dbReference type="NCBIfam" id="TIGR01529">
    <property type="entry name" value="argR_whole"/>
    <property type="match status" value="1"/>
</dbReference>
<dbReference type="NCBIfam" id="NF003457">
    <property type="entry name" value="PRK05066.1"/>
    <property type="match status" value="1"/>
</dbReference>
<dbReference type="PANTHER" id="PTHR34471">
    <property type="entry name" value="ARGININE REPRESSOR"/>
    <property type="match status" value="1"/>
</dbReference>
<dbReference type="PANTHER" id="PTHR34471:SF1">
    <property type="entry name" value="ARGININE REPRESSOR"/>
    <property type="match status" value="1"/>
</dbReference>
<dbReference type="Pfam" id="PF01316">
    <property type="entry name" value="Arg_repressor"/>
    <property type="match status" value="1"/>
</dbReference>
<dbReference type="Pfam" id="PF02863">
    <property type="entry name" value="Arg_repressor_C"/>
    <property type="match status" value="1"/>
</dbReference>
<dbReference type="PRINTS" id="PR01467">
    <property type="entry name" value="ARGREPRESSOR"/>
</dbReference>
<dbReference type="SUPFAM" id="SSF55252">
    <property type="entry name" value="C-terminal domain of arginine repressor"/>
    <property type="match status" value="1"/>
</dbReference>
<dbReference type="SUPFAM" id="SSF46785">
    <property type="entry name" value="Winged helix' DNA-binding domain"/>
    <property type="match status" value="1"/>
</dbReference>
<accession>A0L114</accession>
<name>ARGR_SHESA</name>
<keyword id="KW-0028">Amino-acid biosynthesis</keyword>
<keyword id="KW-0055">Arginine biosynthesis</keyword>
<keyword id="KW-0963">Cytoplasm</keyword>
<keyword id="KW-0238">DNA-binding</keyword>
<keyword id="KW-0678">Repressor</keyword>
<keyword id="KW-0804">Transcription</keyword>
<keyword id="KW-0805">Transcription regulation</keyword>
<gene>
    <name evidence="1" type="primary">argR</name>
    <name type="ordered locus">Shewana3_3510</name>
</gene>
<reference key="1">
    <citation type="submission" date="2006-09" db="EMBL/GenBank/DDBJ databases">
        <title>Complete sequence of chromosome 1 of Shewanella sp. ANA-3.</title>
        <authorList>
            <person name="Copeland A."/>
            <person name="Lucas S."/>
            <person name="Lapidus A."/>
            <person name="Barry K."/>
            <person name="Detter J.C."/>
            <person name="Glavina del Rio T."/>
            <person name="Hammon N."/>
            <person name="Israni S."/>
            <person name="Dalin E."/>
            <person name="Tice H."/>
            <person name="Pitluck S."/>
            <person name="Chertkov O."/>
            <person name="Brettin T."/>
            <person name="Bruce D."/>
            <person name="Han C."/>
            <person name="Tapia R."/>
            <person name="Gilna P."/>
            <person name="Schmutz J."/>
            <person name="Larimer F."/>
            <person name="Land M."/>
            <person name="Hauser L."/>
            <person name="Kyrpides N."/>
            <person name="Kim E."/>
            <person name="Newman D."/>
            <person name="Salticov C."/>
            <person name="Konstantinidis K."/>
            <person name="Klappenback J."/>
            <person name="Tiedje J."/>
            <person name="Richardson P."/>
        </authorList>
    </citation>
    <scope>NUCLEOTIDE SEQUENCE [LARGE SCALE GENOMIC DNA]</scope>
    <source>
        <strain>ANA-3</strain>
    </source>
</reference>
<sequence length="156" mass="16939">MQTTKNQDDLVRIFKAILKEERFGSQSEIVAALQAEGFSNINQSKVSRMLSKFGAVRTRNAKQEMVYCLPAELGVPTAGSPLKNLVLDVDHNQAMIVVRTSPGAAQLIARLLDSIGKPEGILGTIAGDDTIFICPSSIQDIADTLETIKSLFNYAE</sequence>
<proteinExistence type="inferred from homology"/>